<accession>B4T0V8</accession>
<evidence type="ECO:0000255" key="1">
    <source>
        <dbReference type="HAMAP-Rule" id="MF_00496"/>
    </source>
</evidence>
<organism>
    <name type="scientific">Salmonella newport (strain SL254)</name>
    <dbReference type="NCBI Taxonomy" id="423368"/>
    <lineage>
        <taxon>Bacteria</taxon>
        <taxon>Pseudomonadati</taxon>
        <taxon>Pseudomonadota</taxon>
        <taxon>Gammaproteobacteria</taxon>
        <taxon>Enterobacterales</taxon>
        <taxon>Enterobacteriaceae</taxon>
        <taxon>Salmonella</taxon>
    </lineage>
</organism>
<feature type="chain" id="PRO_1000126378" description="Fructose-6-phosphate aldolase">
    <location>
        <begin position="1"/>
        <end position="220"/>
    </location>
</feature>
<feature type="active site" description="Schiff-base intermediate with substrate" evidence="1">
    <location>
        <position position="85"/>
    </location>
</feature>
<name>FSA_SALNS</name>
<dbReference type="EC" id="4.1.2.-" evidence="1"/>
<dbReference type="EMBL" id="CP001113">
    <property type="protein sequence ID" value="ACF63641.1"/>
    <property type="molecule type" value="Genomic_DNA"/>
</dbReference>
<dbReference type="RefSeq" id="WP_000424866.1">
    <property type="nucleotide sequence ID" value="NZ_CCMR01000001.1"/>
</dbReference>
<dbReference type="SMR" id="B4T0V8"/>
<dbReference type="KEGG" id="see:SNSL254_A4441"/>
<dbReference type="HOGENOM" id="CLU_079764_2_0_6"/>
<dbReference type="Proteomes" id="UP000008824">
    <property type="component" value="Chromosome"/>
</dbReference>
<dbReference type="GO" id="GO:0005737">
    <property type="term" value="C:cytoplasm"/>
    <property type="evidence" value="ECO:0007669"/>
    <property type="project" value="UniProtKB-SubCell"/>
</dbReference>
<dbReference type="GO" id="GO:0097023">
    <property type="term" value="F:fructose 6-phosphate aldolase activity"/>
    <property type="evidence" value="ECO:0007669"/>
    <property type="project" value="RHEA"/>
</dbReference>
<dbReference type="GO" id="GO:0006000">
    <property type="term" value="P:fructose metabolic process"/>
    <property type="evidence" value="ECO:0007669"/>
    <property type="project" value="UniProtKB-UniRule"/>
</dbReference>
<dbReference type="CDD" id="cd00956">
    <property type="entry name" value="Transaldolase_FSA"/>
    <property type="match status" value="1"/>
</dbReference>
<dbReference type="FunFam" id="3.20.20.70:FF:000018">
    <property type="entry name" value="Probable transaldolase"/>
    <property type="match status" value="1"/>
</dbReference>
<dbReference type="Gene3D" id="3.20.20.70">
    <property type="entry name" value="Aldolase class I"/>
    <property type="match status" value="1"/>
</dbReference>
<dbReference type="HAMAP" id="MF_00496">
    <property type="entry name" value="F6P_aldolase"/>
    <property type="match status" value="1"/>
</dbReference>
<dbReference type="InterPro" id="IPR013785">
    <property type="entry name" value="Aldolase_TIM"/>
</dbReference>
<dbReference type="InterPro" id="IPR023001">
    <property type="entry name" value="F6P_aldolase"/>
</dbReference>
<dbReference type="InterPro" id="IPR001585">
    <property type="entry name" value="TAL/FSA"/>
</dbReference>
<dbReference type="InterPro" id="IPR004731">
    <property type="entry name" value="Transaldolase_3B/F6P_aldolase"/>
</dbReference>
<dbReference type="InterPro" id="IPR018225">
    <property type="entry name" value="Transaldolase_AS"/>
</dbReference>
<dbReference type="InterPro" id="IPR033919">
    <property type="entry name" value="TSA/FSA_arc/bac"/>
</dbReference>
<dbReference type="NCBIfam" id="TIGR00875">
    <property type="entry name" value="fsa_talC_mipB"/>
    <property type="match status" value="1"/>
</dbReference>
<dbReference type="NCBIfam" id="NF009296">
    <property type="entry name" value="PRK12653.1"/>
    <property type="match status" value="1"/>
</dbReference>
<dbReference type="PANTHER" id="PTHR10683:SF40">
    <property type="entry name" value="FRUCTOSE-6-PHOSPHATE ALDOLASE 1-RELATED"/>
    <property type="match status" value="1"/>
</dbReference>
<dbReference type="PANTHER" id="PTHR10683">
    <property type="entry name" value="TRANSALDOLASE"/>
    <property type="match status" value="1"/>
</dbReference>
<dbReference type="Pfam" id="PF00923">
    <property type="entry name" value="TAL_FSA"/>
    <property type="match status" value="1"/>
</dbReference>
<dbReference type="SUPFAM" id="SSF51569">
    <property type="entry name" value="Aldolase"/>
    <property type="match status" value="1"/>
</dbReference>
<dbReference type="PROSITE" id="PS01054">
    <property type="entry name" value="TRANSALDOLASE_1"/>
    <property type="match status" value="1"/>
</dbReference>
<dbReference type="PROSITE" id="PS00958">
    <property type="entry name" value="TRANSALDOLASE_2"/>
    <property type="match status" value="1"/>
</dbReference>
<proteinExistence type="inferred from homology"/>
<comment type="function">
    <text evidence="1">Catalyzes the reversible formation of fructose 6-phosphate from dihydroxyacetone and D-glyceraldehyde 3-phosphate via an aldolization reaction.</text>
</comment>
<comment type="catalytic activity">
    <reaction evidence="1">
        <text>beta-D-fructose 6-phosphate = dihydroxyacetone + D-glyceraldehyde 3-phosphate</text>
        <dbReference type="Rhea" id="RHEA:28002"/>
        <dbReference type="ChEBI" id="CHEBI:16016"/>
        <dbReference type="ChEBI" id="CHEBI:57634"/>
        <dbReference type="ChEBI" id="CHEBI:59776"/>
    </reaction>
</comment>
<comment type="subunit">
    <text evidence="1">Homodecamer.</text>
</comment>
<comment type="subcellular location">
    <subcellularLocation>
        <location evidence="1">Cytoplasm</location>
    </subcellularLocation>
</comment>
<comment type="similarity">
    <text evidence="1">Belongs to the transaldolase family. Type 3A subfamily.</text>
</comment>
<keyword id="KW-0119">Carbohydrate metabolism</keyword>
<keyword id="KW-0963">Cytoplasm</keyword>
<keyword id="KW-0456">Lyase</keyword>
<keyword id="KW-0704">Schiff base</keyword>
<gene>
    <name evidence="1" type="primary">fsa</name>
    <name type="ordered locus">SNSL254_A4441</name>
</gene>
<sequence length="220" mass="23525">MELYLDTANVAEVERLARIFPIAGVTTNPSIVAASKESIWDVLPRLQNAIGEEGTLFAQTMSRDAKGMVEEAKRLNNAIPGIVVKIPVTAEGLAAIKLLKKEGIVTLGTAVYSASQGLLAALAGAKYVAPYVNRVDAQGGDGIRMVQELQTLLEHHAPDSMVLAASFKTPRQALDCLLAGCQAITLPLDVAQQMLNTPAVESAIEKFEQDWKNAFGNLNL</sequence>
<protein>
    <recommendedName>
        <fullName evidence="1">Fructose-6-phosphate aldolase</fullName>
        <ecNumber evidence="1">4.1.2.-</ecNumber>
    </recommendedName>
</protein>
<reference key="1">
    <citation type="journal article" date="2011" name="J. Bacteriol.">
        <title>Comparative genomics of 28 Salmonella enterica isolates: evidence for CRISPR-mediated adaptive sublineage evolution.</title>
        <authorList>
            <person name="Fricke W.F."/>
            <person name="Mammel M.K."/>
            <person name="McDermott P.F."/>
            <person name="Tartera C."/>
            <person name="White D.G."/>
            <person name="Leclerc J.E."/>
            <person name="Ravel J."/>
            <person name="Cebula T.A."/>
        </authorList>
    </citation>
    <scope>NUCLEOTIDE SEQUENCE [LARGE SCALE GENOMIC DNA]</scope>
    <source>
        <strain>SL254</strain>
    </source>
</reference>